<gene>
    <name evidence="1" type="primary">ynfB</name>
    <name type="ordered locus">E2348C_1667</name>
</gene>
<evidence type="ECO:0000255" key="1">
    <source>
        <dbReference type="HAMAP-Rule" id="MF_01581"/>
    </source>
</evidence>
<keyword id="KW-1185">Reference proteome</keyword>
<keyword id="KW-0732">Signal</keyword>
<proteinExistence type="inferred from homology"/>
<accession>B7URS2</accession>
<comment type="similarity">
    <text evidence="1">Belongs to the UPF0482 family.</text>
</comment>
<sequence>MKITLSKRIGLLAFLLPCALALSTTVHAETNKLVIESGDSAQSRQRAAMEKEQWNDTRNLRQKVNKRTEKEWDKADAAFDNRDKCEQSANINAYWEPNTLRCLDRRTGRVIIP</sequence>
<dbReference type="EMBL" id="FM180568">
    <property type="protein sequence ID" value="CAS09215.1"/>
    <property type="molecule type" value="Genomic_DNA"/>
</dbReference>
<dbReference type="RefSeq" id="WP_000705201.1">
    <property type="nucleotide sequence ID" value="NC_011601.1"/>
</dbReference>
<dbReference type="KEGG" id="ecg:E2348C_1667"/>
<dbReference type="HOGENOM" id="CLU_167574_0_0_6"/>
<dbReference type="Proteomes" id="UP000008205">
    <property type="component" value="Chromosome"/>
</dbReference>
<dbReference type="HAMAP" id="MF_01581">
    <property type="entry name" value="UPF0482"/>
    <property type="match status" value="1"/>
</dbReference>
<dbReference type="InterPro" id="IPR009700">
    <property type="entry name" value="DUF1283"/>
</dbReference>
<dbReference type="NCBIfam" id="NF010180">
    <property type="entry name" value="PRK13659.1"/>
    <property type="match status" value="1"/>
</dbReference>
<dbReference type="Pfam" id="PF06932">
    <property type="entry name" value="DUF1283"/>
    <property type="match status" value="1"/>
</dbReference>
<organism>
    <name type="scientific">Escherichia coli O127:H6 (strain E2348/69 / EPEC)</name>
    <dbReference type="NCBI Taxonomy" id="574521"/>
    <lineage>
        <taxon>Bacteria</taxon>
        <taxon>Pseudomonadati</taxon>
        <taxon>Pseudomonadota</taxon>
        <taxon>Gammaproteobacteria</taxon>
        <taxon>Enterobacterales</taxon>
        <taxon>Enterobacteriaceae</taxon>
        <taxon>Escherichia</taxon>
    </lineage>
</organism>
<name>YNFB_ECO27</name>
<reference key="1">
    <citation type="journal article" date="2009" name="J. Bacteriol.">
        <title>Complete genome sequence and comparative genome analysis of enteropathogenic Escherichia coli O127:H6 strain E2348/69.</title>
        <authorList>
            <person name="Iguchi A."/>
            <person name="Thomson N.R."/>
            <person name="Ogura Y."/>
            <person name="Saunders D."/>
            <person name="Ooka T."/>
            <person name="Henderson I.R."/>
            <person name="Harris D."/>
            <person name="Asadulghani M."/>
            <person name="Kurokawa K."/>
            <person name="Dean P."/>
            <person name="Kenny B."/>
            <person name="Quail M.A."/>
            <person name="Thurston S."/>
            <person name="Dougan G."/>
            <person name="Hayashi T."/>
            <person name="Parkhill J."/>
            <person name="Frankel G."/>
        </authorList>
    </citation>
    <scope>NUCLEOTIDE SEQUENCE [LARGE SCALE GENOMIC DNA]</scope>
    <source>
        <strain>E2348/69 / EPEC</strain>
    </source>
</reference>
<protein>
    <recommendedName>
        <fullName evidence="1">UPF0482 protein YnfB</fullName>
    </recommendedName>
</protein>
<feature type="signal peptide" evidence="1">
    <location>
        <begin position="1"/>
        <end position="28"/>
    </location>
</feature>
<feature type="chain" id="PRO_1000185649" description="UPF0482 protein YnfB">
    <location>
        <begin position="29"/>
        <end position="113"/>
    </location>
</feature>